<keyword id="KW-0007">Acetylation</keyword>
<keyword id="KW-0067">ATP-binding</keyword>
<keyword id="KW-0131">Cell cycle</keyword>
<keyword id="KW-0966">Cell projection</keyword>
<keyword id="KW-0963">Cytoplasm</keyword>
<keyword id="KW-0903">Direct protein sequencing</keyword>
<keyword id="KW-0418">Kinase</keyword>
<keyword id="KW-0460">Magnesium</keyword>
<keyword id="KW-0479">Metal-binding</keyword>
<keyword id="KW-0546">Nucleotide metabolism</keyword>
<keyword id="KW-0547">Nucleotide-binding</keyword>
<keyword id="KW-0539">Nucleus</keyword>
<keyword id="KW-0597">Phosphoprotein</keyword>
<keyword id="KW-0808">Transferase</keyword>
<evidence type="ECO:0000250" key="1">
    <source>
        <dbReference type="UniProtKB" id="P15531"/>
    </source>
</evidence>
<evidence type="ECO:0000250" key="2">
    <source>
        <dbReference type="UniProtKB" id="P22392"/>
    </source>
</evidence>
<evidence type="ECO:0000255" key="3"/>
<evidence type="ECO:0000255" key="4">
    <source>
        <dbReference type="PROSITE-ProRule" id="PRU10030"/>
    </source>
</evidence>
<evidence type="ECO:0000269" key="5">
    <source>
    </source>
</evidence>
<evidence type="ECO:0000303" key="6">
    <source>
    </source>
</evidence>
<evidence type="ECO:0000305" key="7"/>
<feature type="chain" id="PRO_0000306189" description="Nucleoside diphosphate kinase B">
    <location>
        <begin position="1"/>
        <end position="128"/>
    </location>
</feature>
<feature type="active site" description="Pros-phosphohistidine intermediate" evidence="1 4">
    <location>
        <position position="94"/>
    </location>
</feature>
<feature type="binding site" evidence="1">
    <location>
        <position position="9"/>
    </location>
    <ligand>
        <name>ATP</name>
        <dbReference type="ChEBI" id="CHEBI:30616"/>
    </ligand>
</feature>
<feature type="binding site" evidence="1">
    <location>
        <position position="39"/>
    </location>
    <ligand>
        <name>ATP</name>
        <dbReference type="ChEBI" id="CHEBI:30616"/>
    </ligand>
</feature>
<feature type="binding site" evidence="1">
    <location>
        <position position="70"/>
    </location>
    <ligand>
        <name>ATP</name>
        <dbReference type="ChEBI" id="CHEBI:30616"/>
    </ligand>
</feature>
<feature type="binding site" evidence="1">
    <location>
        <position position="81"/>
    </location>
    <ligand>
        <name>ATP</name>
        <dbReference type="ChEBI" id="CHEBI:30616"/>
    </ligand>
</feature>
<feature type="binding site" evidence="1">
    <location>
        <position position="91"/>
    </location>
    <ligand>
        <name>ATP</name>
        <dbReference type="ChEBI" id="CHEBI:30616"/>
    </ligand>
</feature>
<feature type="modified residue" description="N-acetylmethionine" evidence="5">
    <location>
        <position position="1"/>
    </location>
</feature>
<feature type="non-consecutive residues" evidence="6">
    <location>
        <begin position="23"/>
        <end position="24"/>
    </location>
</feature>
<feature type="non-consecutive residues" evidence="6">
    <location>
        <begin position="27"/>
        <end position="28"/>
    </location>
</feature>
<feature type="non-consecutive residues" evidence="6">
    <location>
        <begin position="29"/>
        <end position="30"/>
    </location>
</feature>
<feature type="non-consecutive residues" evidence="6">
    <location>
        <begin position="64"/>
        <end position="65"/>
    </location>
</feature>
<proteinExistence type="evidence at protein level"/>
<sequence length="128" mass="14393">MEQTFVAIKPDGVQRGLCGEVMKFIQPMKHYLDLKDMPFYAGLCKYMSSGPVFAMVWEGEGIVKMMLGETNPADSKPGSIRGDFCINIGRNIIHGSDTVENAKMEVGLWFKPEEFVAYAEKAKAWVYE</sequence>
<reference evidence="7" key="1">
    <citation type="journal article" date="2007" name="J. Proteome Res.">
        <title>De novo mass spectrometry sequencing and characterization of species-specific peptides from nucleoside diphosphate kinase B for the classification of commercial fish species belonging to the family Merlucciidae.</title>
        <authorList>
            <person name="Carrera M."/>
            <person name="Canas B."/>
            <person name="Pineiro C."/>
            <person name="Vazquez J."/>
            <person name="Gallardo J.M."/>
        </authorList>
    </citation>
    <scope>PROTEIN SEQUENCE</scope>
    <scope>ACETYLATION AT MET-1</scope>
    <source>
        <tissue evidence="5">White muscle</tissue>
    </source>
</reference>
<organism>
    <name type="scientific">Merluccius hubbsi</name>
    <name type="common">Argentine hake</name>
    <name type="synonym">Merluccius gayi</name>
    <dbReference type="NCBI Taxonomy" id="89949"/>
    <lineage>
        <taxon>Eukaryota</taxon>
        <taxon>Metazoa</taxon>
        <taxon>Chordata</taxon>
        <taxon>Craniata</taxon>
        <taxon>Vertebrata</taxon>
        <taxon>Euteleostomi</taxon>
        <taxon>Actinopterygii</taxon>
        <taxon>Neopterygii</taxon>
        <taxon>Teleostei</taxon>
        <taxon>Neoteleostei</taxon>
        <taxon>Acanthomorphata</taxon>
        <taxon>Zeiogadaria</taxon>
        <taxon>Gadariae</taxon>
        <taxon>Gadiformes</taxon>
        <taxon>Gadoidei</taxon>
        <taxon>Merlucciidae</taxon>
        <taxon>Merluccius</taxon>
    </lineage>
</organism>
<dbReference type="EC" id="2.7.4.6"/>
<dbReference type="SMR" id="P85285"/>
<dbReference type="iPTMnet" id="P85285"/>
<dbReference type="BRENDA" id="2.7.4.6">
    <property type="organism ID" value="10452"/>
</dbReference>
<dbReference type="GO" id="GO:0005737">
    <property type="term" value="C:cytoplasm"/>
    <property type="evidence" value="ECO:0007669"/>
    <property type="project" value="UniProtKB-SubCell"/>
</dbReference>
<dbReference type="GO" id="GO:0030027">
    <property type="term" value="C:lamellipodium"/>
    <property type="evidence" value="ECO:0007669"/>
    <property type="project" value="UniProtKB-SubCell"/>
</dbReference>
<dbReference type="GO" id="GO:0005634">
    <property type="term" value="C:nucleus"/>
    <property type="evidence" value="ECO:0007669"/>
    <property type="project" value="UniProtKB-SubCell"/>
</dbReference>
<dbReference type="GO" id="GO:0001726">
    <property type="term" value="C:ruffle"/>
    <property type="evidence" value="ECO:0007669"/>
    <property type="project" value="UniProtKB-SubCell"/>
</dbReference>
<dbReference type="GO" id="GO:0005524">
    <property type="term" value="F:ATP binding"/>
    <property type="evidence" value="ECO:0007669"/>
    <property type="project" value="UniProtKB-KW"/>
</dbReference>
<dbReference type="GO" id="GO:0046872">
    <property type="term" value="F:metal ion binding"/>
    <property type="evidence" value="ECO:0007669"/>
    <property type="project" value="UniProtKB-KW"/>
</dbReference>
<dbReference type="GO" id="GO:0004550">
    <property type="term" value="F:nucleoside diphosphate kinase activity"/>
    <property type="evidence" value="ECO:0007669"/>
    <property type="project" value="UniProtKB-EC"/>
</dbReference>
<dbReference type="GO" id="GO:0009117">
    <property type="term" value="P:nucleotide metabolic process"/>
    <property type="evidence" value="ECO:0007669"/>
    <property type="project" value="UniProtKB-KW"/>
</dbReference>
<dbReference type="CDD" id="cd04413">
    <property type="entry name" value="NDPk_I"/>
    <property type="match status" value="1"/>
</dbReference>
<dbReference type="FunFam" id="3.30.70.141:FF:000039">
    <property type="entry name" value="Nucleoside diphosphate kinase B"/>
    <property type="match status" value="1"/>
</dbReference>
<dbReference type="Gene3D" id="3.30.70.141">
    <property type="entry name" value="Nucleoside diphosphate kinase-like domain"/>
    <property type="match status" value="1"/>
</dbReference>
<dbReference type="InterPro" id="IPR034907">
    <property type="entry name" value="NDK-like_dom"/>
</dbReference>
<dbReference type="InterPro" id="IPR036850">
    <property type="entry name" value="NDK-like_dom_sf"/>
</dbReference>
<dbReference type="PANTHER" id="PTHR11349">
    <property type="entry name" value="NUCLEOSIDE DIPHOSPHATE KINASE"/>
    <property type="match status" value="1"/>
</dbReference>
<dbReference type="Pfam" id="PF00334">
    <property type="entry name" value="NDK"/>
    <property type="match status" value="1"/>
</dbReference>
<dbReference type="SMART" id="SM00562">
    <property type="entry name" value="NDK"/>
    <property type="match status" value="1"/>
</dbReference>
<dbReference type="SUPFAM" id="SSF54919">
    <property type="entry name" value="Nucleoside diphosphate kinase, NDK"/>
    <property type="match status" value="1"/>
</dbReference>
<dbReference type="PROSITE" id="PS51374">
    <property type="entry name" value="NDPK_LIKE"/>
    <property type="match status" value="1"/>
</dbReference>
<protein>
    <recommendedName>
        <fullName>Nucleoside diphosphate kinase B</fullName>
        <shortName>NDK B</shortName>
        <shortName>NDP kinase B</shortName>
        <ecNumber>2.7.4.6</ecNumber>
    </recommendedName>
</protein>
<name>NDKB_MERHU</name>
<accession>P85285</accession>
<gene>
    <name type="primary">nme2</name>
</gene>
<comment type="function">
    <text evidence="1">Major role in the synthesis of nucleoside triphosphates other than ATP.</text>
</comment>
<comment type="catalytic activity">
    <reaction evidence="1 4">
        <text>a 2'-deoxyribonucleoside 5'-diphosphate + ATP = a 2'-deoxyribonucleoside 5'-triphosphate + ADP</text>
        <dbReference type="Rhea" id="RHEA:44640"/>
        <dbReference type="ChEBI" id="CHEBI:30616"/>
        <dbReference type="ChEBI" id="CHEBI:61560"/>
        <dbReference type="ChEBI" id="CHEBI:73316"/>
        <dbReference type="ChEBI" id="CHEBI:456216"/>
        <dbReference type="EC" id="2.7.4.6"/>
    </reaction>
</comment>
<comment type="catalytic activity">
    <reaction evidence="1 4">
        <text>a ribonucleoside 5'-diphosphate + ATP = a ribonucleoside 5'-triphosphate + ADP</text>
        <dbReference type="Rhea" id="RHEA:18113"/>
        <dbReference type="ChEBI" id="CHEBI:30616"/>
        <dbReference type="ChEBI" id="CHEBI:57930"/>
        <dbReference type="ChEBI" id="CHEBI:61557"/>
        <dbReference type="ChEBI" id="CHEBI:456216"/>
        <dbReference type="EC" id="2.7.4.6"/>
    </reaction>
</comment>
<comment type="cofactor">
    <cofactor evidence="1">
        <name>Mg(2+)</name>
        <dbReference type="ChEBI" id="CHEBI:18420"/>
    </cofactor>
</comment>
<comment type="subcellular location">
    <subcellularLocation>
        <location evidence="2">Cytoplasm</location>
    </subcellularLocation>
    <subcellularLocation>
        <location evidence="2">Nucleus</location>
    </subcellularLocation>
    <subcellularLocation>
        <location evidence="2">Cell projection</location>
        <location evidence="2">Lamellipodium</location>
    </subcellularLocation>
    <subcellularLocation>
        <location evidence="2">Cell projection</location>
        <location evidence="2">Ruffle</location>
    </subcellularLocation>
</comment>
<comment type="similarity">
    <text evidence="3">Belongs to the NDK family.</text>
</comment>